<comment type="function">
    <text evidence="1">Produces ATP from ADP in the presence of a proton gradient across the membrane.</text>
</comment>
<comment type="subunit">
    <text>F-type ATPases have 2 components, CF(1) - the catalytic core - and CF(0) - the membrane proton channel. CF(1) has five subunits: alpha(3), beta(3), gamma(1), delta(1), epsilon(1). CF(0) has three main subunits: a, b and c.</text>
</comment>
<comment type="subcellular location">
    <subcellularLocation>
        <location evidence="1">Cell membrane</location>
        <topology evidence="1">Peripheral membrane protein</topology>
    </subcellularLocation>
</comment>
<comment type="similarity">
    <text evidence="2">Belongs to the ATPase epsilon chain family.</text>
</comment>
<feature type="chain" id="PRO_0000188160" description="ATP synthase epsilon chain">
    <location>
        <begin position="1"/>
        <end position="133"/>
    </location>
</feature>
<protein>
    <recommendedName>
        <fullName>ATP synthase epsilon chain</fullName>
    </recommendedName>
    <alternativeName>
        <fullName>ATP synthase F1 sector epsilon subunit</fullName>
    </alternativeName>
    <alternativeName>
        <fullName>F-ATPase epsilon subunit</fullName>
    </alternativeName>
</protein>
<organism>
    <name type="scientific">Mycoplasma genitalium (strain ATCC 33530 / DSM 19775 / NCTC 10195 / G37)</name>
    <name type="common">Mycoplasmoides genitalium</name>
    <dbReference type="NCBI Taxonomy" id="243273"/>
    <lineage>
        <taxon>Bacteria</taxon>
        <taxon>Bacillati</taxon>
        <taxon>Mycoplasmatota</taxon>
        <taxon>Mycoplasmoidales</taxon>
        <taxon>Mycoplasmoidaceae</taxon>
        <taxon>Mycoplasmoides</taxon>
    </lineage>
</organism>
<keyword id="KW-0066">ATP synthesis</keyword>
<keyword id="KW-1003">Cell membrane</keyword>
<keyword id="KW-0139">CF(1)</keyword>
<keyword id="KW-0375">Hydrogen ion transport</keyword>
<keyword id="KW-0406">Ion transport</keyword>
<keyword id="KW-0472">Membrane</keyword>
<keyword id="KW-1185">Reference proteome</keyword>
<keyword id="KW-0813">Transport</keyword>
<accession>P47638</accession>
<name>ATPE_MYCGE</name>
<dbReference type="EMBL" id="L43967">
    <property type="protein sequence ID" value="AAC71626.1"/>
    <property type="molecule type" value="Genomic_DNA"/>
</dbReference>
<dbReference type="PIR" id="A64244">
    <property type="entry name" value="A64244"/>
</dbReference>
<dbReference type="RefSeq" id="WP_010869467.1">
    <property type="nucleotide sequence ID" value="NC_000908.2"/>
</dbReference>
<dbReference type="SMR" id="P47638"/>
<dbReference type="STRING" id="243273.MG_398"/>
<dbReference type="GeneID" id="88282584"/>
<dbReference type="KEGG" id="mge:MG_398"/>
<dbReference type="eggNOG" id="COG0355">
    <property type="taxonomic scope" value="Bacteria"/>
</dbReference>
<dbReference type="HOGENOM" id="CLU_1904395_0_0_14"/>
<dbReference type="InParanoid" id="P47638"/>
<dbReference type="OrthoDB" id="389606at2"/>
<dbReference type="BioCyc" id="MGEN243273:G1GJ2-495-MONOMER"/>
<dbReference type="Proteomes" id="UP000000807">
    <property type="component" value="Chromosome"/>
</dbReference>
<dbReference type="GO" id="GO:0005886">
    <property type="term" value="C:plasma membrane"/>
    <property type="evidence" value="ECO:0007669"/>
    <property type="project" value="UniProtKB-SubCell"/>
</dbReference>
<dbReference type="GO" id="GO:0045259">
    <property type="term" value="C:proton-transporting ATP synthase complex"/>
    <property type="evidence" value="ECO:0007669"/>
    <property type="project" value="UniProtKB-KW"/>
</dbReference>
<dbReference type="GO" id="GO:0005524">
    <property type="term" value="F:ATP binding"/>
    <property type="evidence" value="ECO:0007669"/>
    <property type="project" value="UniProtKB-UniRule"/>
</dbReference>
<dbReference type="GO" id="GO:0046933">
    <property type="term" value="F:proton-transporting ATP synthase activity, rotational mechanism"/>
    <property type="evidence" value="ECO:0007669"/>
    <property type="project" value="UniProtKB-UniRule"/>
</dbReference>
<dbReference type="Gene3D" id="2.60.15.10">
    <property type="entry name" value="F0F1 ATP synthase delta/epsilon subunit, N-terminal"/>
    <property type="match status" value="1"/>
</dbReference>
<dbReference type="HAMAP" id="MF_00530">
    <property type="entry name" value="ATP_synth_epsil_bac"/>
    <property type="match status" value="1"/>
</dbReference>
<dbReference type="InterPro" id="IPR001469">
    <property type="entry name" value="ATP_synth_F1_dsu/esu"/>
</dbReference>
<dbReference type="InterPro" id="IPR020546">
    <property type="entry name" value="ATP_synth_F1_dsu/esu_N"/>
</dbReference>
<dbReference type="InterPro" id="IPR036771">
    <property type="entry name" value="ATPsynth_dsu/esu_N"/>
</dbReference>
<dbReference type="NCBIfam" id="NF001812">
    <property type="entry name" value="PRK00539.1"/>
    <property type="match status" value="1"/>
</dbReference>
<dbReference type="Pfam" id="PF02823">
    <property type="entry name" value="ATP-synt_DE_N"/>
    <property type="match status" value="1"/>
</dbReference>
<dbReference type="SUPFAM" id="SSF51344">
    <property type="entry name" value="Epsilon subunit of F1F0-ATP synthase N-terminal domain"/>
    <property type="match status" value="1"/>
</dbReference>
<sequence length="133" mass="15151">MKLLRFLVLSPSGIKLDKTIISAQVKTTEGYIGLNFNRAPLIAAIQSHLCKIIFADQTKREAIIGAGLMLIKKTEAKIFTENFVFADEVDINETLKRKTELERKIHHIKDAKLNVKIEQNLMFELLKLSSKKK</sequence>
<gene>
    <name type="primary">atpC</name>
    <name type="ordered locus">MG398</name>
</gene>
<proteinExistence type="inferred from homology"/>
<evidence type="ECO:0000250" key="1"/>
<evidence type="ECO:0000305" key="2"/>
<reference key="1">
    <citation type="journal article" date="1995" name="Science">
        <title>The minimal gene complement of Mycoplasma genitalium.</title>
        <authorList>
            <person name="Fraser C.M."/>
            <person name="Gocayne J.D."/>
            <person name="White O."/>
            <person name="Adams M.D."/>
            <person name="Clayton R.A."/>
            <person name="Fleischmann R.D."/>
            <person name="Bult C.J."/>
            <person name="Kerlavage A.R."/>
            <person name="Sutton G.G."/>
            <person name="Kelley J.M."/>
            <person name="Fritchman J.L."/>
            <person name="Weidman J.F."/>
            <person name="Small K.V."/>
            <person name="Sandusky M."/>
            <person name="Fuhrmann J.L."/>
            <person name="Nguyen D.T."/>
            <person name="Utterback T.R."/>
            <person name="Saudek D.M."/>
            <person name="Phillips C.A."/>
            <person name="Merrick J.M."/>
            <person name="Tomb J.-F."/>
            <person name="Dougherty B.A."/>
            <person name="Bott K.F."/>
            <person name="Hu P.-C."/>
            <person name="Lucier T.S."/>
            <person name="Peterson S.N."/>
            <person name="Smith H.O."/>
            <person name="Hutchison C.A. III"/>
            <person name="Venter J.C."/>
        </authorList>
    </citation>
    <scope>NUCLEOTIDE SEQUENCE [LARGE SCALE GENOMIC DNA]</scope>
    <source>
        <strain>ATCC 33530 / DSM 19775 / NCTC 10195 / G37</strain>
    </source>
</reference>